<reference key="1">
    <citation type="journal article" date="1998" name="Science">
        <title>Genome sequence of the nematode C. elegans: a platform for investigating biology.</title>
        <authorList>
            <consortium name="The C. elegans sequencing consortium"/>
        </authorList>
    </citation>
    <scope>NUCLEOTIDE SEQUENCE [LARGE SCALE GENOMIC DNA]</scope>
    <source>
        <strain>Bristol N2</strain>
    </source>
</reference>
<protein>
    <recommendedName>
        <fullName>FHIP family protein C05D11.8</fullName>
    </recommendedName>
</protein>
<evidence type="ECO:0000256" key="1">
    <source>
        <dbReference type="SAM" id="MobiDB-lite"/>
    </source>
</evidence>
<evidence type="ECO:0000305" key="2"/>
<evidence type="ECO:0000312" key="3">
    <source>
        <dbReference type="WormBase" id="C05D11.8"/>
    </source>
</evidence>
<name>U518_CAEEL</name>
<comment type="similarity">
    <text evidence="2">Belongs to the FHIP family.</text>
</comment>
<dbReference type="EMBL" id="BX284603">
    <property type="protein sequence ID" value="CCD63198.2"/>
    <property type="molecule type" value="Genomic_DNA"/>
</dbReference>
<dbReference type="PIR" id="D88482">
    <property type="entry name" value="D88482"/>
</dbReference>
<dbReference type="RefSeq" id="NP_001367439.1">
    <property type="nucleotide sequence ID" value="NM_001379762.1"/>
</dbReference>
<dbReference type="RefSeq" id="NP_498407.1">
    <property type="nucleotide sequence ID" value="NM_066006.1"/>
</dbReference>
<dbReference type="SMR" id="Q11187"/>
<dbReference type="FunCoup" id="Q11187">
    <property type="interactions" value="592"/>
</dbReference>
<dbReference type="STRING" id="6239.C05D11.8.1"/>
<dbReference type="PaxDb" id="6239-C05D11.8"/>
<dbReference type="PeptideAtlas" id="Q11187"/>
<dbReference type="EnsemblMetazoa" id="C05D11.8.1">
    <property type="protein sequence ID" value="C05D11.8.1"/>
    <property type="gene ID" value="WBGene00015485"/>
</dbReference>
<dbReference type="GeneID" id="182260"/>
<dbReference type="UCSC" id="C05D11.8">
    <property type="organism name" value="c. elegans"/>
</dbReference>
<dbReference type="AGR" id="WB:WBGene00015485"/>
<dbReference type="WormBase" id="C05D11.8">
    <property type="protein sequence ID" value="CE54171"/>
    <property type="gene ID" value="WBGene00015485"/>
</dbReference>
<dbReference type="eggNOG" id="KOG3695">
    <property type="taxonomic scope" value="Eukaryota"/>
</dbReference>
<dbReference type="GeneTree" id="ENSGT00950000182936"/>
<dbReference type="HOGENOM" id="CLU_008561_0_0_1"/>
<dbReference type="InParanoid" id="Q11187"/>
<dbReference type="OrthoDB" id="6287422at2759"/>
<dbReference type="PhylomeDB" id="Q11187"/>
<dbReference type="PRO" id="PR:Q11187"/>
<dbReference type="Proteomes" id="UP000001940">
    <property type="component" value="Chromosome III"/>
</dbReference>
<dbReference type="Bgee" id="WBGene00015485">
    <property type="expression patterns" value="Expressed in pharyngeal muscle cell (C elegans) and 3 other cell types or tissues"/>
</dbReference>
<dbReference type="InterPro" id="IPR019384">
    <property type="entry name" value="FHIP"/>
</dbReference>
<dbReference type="InterPro" id="IPR045669">
    <property type="entry name" value="FHIP_C"/>
</dbReference>
<dbReference type="PANTHER" id="PTHR21705:SF11">
    <property type="entry name" value="FHIP FAMILY PROTEIN CG3558"/>
    <property type="match status" value="1"/>
</dbReference>
<dbReference type="PANTHER" id="PTHR21705">
    <property type="entry name" value="RAI16 PROTEIN-RELATED"/>
    <property type="match status" value="1"/>
</dbReference>
<dbReference type="Pfam" id="PF19314">
    <property type="entry name" value="DUF5917"/>
    <property type="match status" value="1"/>
</dbReference>
<dbReference type="Pfam" id="PF10257">
    <property type="entry name" value="RAI16-like"/>
    <property type="match status" value="1"/>
</dbReference>
<gene>
    <name evidence="3" type="ORF">C05D11.8</name>
</gene>
<proteinExistence type="inferred from homology"/>
<feature type="chain" id="PRO_0000065149" description="FHIP family protein C05D11.8">
    <location>
        <begin position="1"/>
        <end position="896"/>
    </location>
</feature>
<feature type="region of interest" description="Disordered" evidence="1">
    <location>
        <begin position="823"/>
        <end position="865"/>
    </location>
</feature>
<feature type="compositionally biased region" description="Basic and acidic residues" evidence="1">
    <location>
        <begin position="853"/>
        <end position="865"/>
    </location>
</feature>
<organism>
    <name type="scientific">Caenorhabditis elegans</name>
    <dbReference type="NCBI Taxonomy" id="6239"/>
    <lineage>
        <taxon>Eukaryota</taxon>
        <taxon>Metazoa</taxon>
        <taxon>Ecdysozoa</taxon>
        <taxon>Nematoda</taxon>
        <taxon>Chromadorea</taxon>
        <taxon>Rhabditida</taxon>
        <taxon>Rhabditina</taxon>
        <taxon>Rhabditomorpha</taxon>
        <taxon>Rhabditoidea</taxon>
        <taxon>Rhabditidae</taxon>
        <taxon>Peloderinae</taxon>
        <taxon>Caenorhabditis</taxon>
    </lineage>
</organism>
<sequence>MDLNFSATSVSRARWSSAYASDPTVWEQLFETKWSVVSNILERKLSDPEHKVVYDELMSLLENMTNMCTLLMLEANSQPEPIIGPILDKFFTEQILERVLDWSIQLTDSLKSICQLAIIRIFEMIVSDSHSQNHCLLVHKPILNPLFRLCEWFQRADIYWRVSKSENKKTSEAEKMFVLLLNQICTKLVEDRTLLHFFFHSNQFVVFTELIPFLYSAGDTGQLARDAVLLILSVSAEDKSIAEYVTERTSFCQVLTTGLSACFSQLPRIILGDGGERLVEDEYRDFLADYHSALLFCNAIAQTAHSEVVGNIASFFYTGFLTNVIKPAFLQNDREYIGASMVYLQMCLETIVEPVLVRSIVQMILTERDDNGTLFYEIVISYVKGGDKTSVTSLSLIDSFLKLACEDVMLALVFRPLLTNHSATKKQLSVVYKASRGGELSQTYLNCIPICMLEYREAASHALLSSYMYSTRIRMDARSEQCRSWKWKYDGVVAGSFVLPAESDDDATFNVSFSRMSSSRSSTSMTPYVSNRYSNGSHLSHVFNINKVCPLGQPQEQNADLSLSELDDDLEEDKDFILPSIDMEDVSEEMTASKVMTQSTIDYMHISGLDGSESDDALPIRIEDSERSETDSEAPKSNFVLSGWRDVKDMGTFKQLLSKQEVKGEKLDSSEIVDFINQKYDSLKLGEEKKEDIEEEESENETKGKEIKSRIVTDGFSIYNFPERSKLLQTILEGVETLCENELPFNTELFSLIADLATYPQPLLAYYLFDPKEDSSEKHLLTILQGVQTRIDVMAEGIESFEIWIERGFETLKARACRIKQQSTASSPRTSDDHDPTLFYGRSTMAPPGRKPLLREPSRQETLDDQTARRTALAAILLAHLCQMLASIVLQQSLII</sequence>
<keyword id="KW-1185">Reference proteome</keyword>
<accession>Q11187</accession>